<reference key="1">
    <citation type="journal article" date="2002" name="DNA Res.">
        <title>Prediction of the coding sequences of mouse homologues of KIAA gene: I. The complete nucleotide sequences of 100 mouse KIAA-homologous cDNAs identified by screening of terminal sequences of cDNA clones randomly sampled from size-fractionated libraries.</title>
        <authorList>
            <person name="Okazaki N."/>
            <person name="Kikuno R."/>
            <person name="Ohara R."/>
            <person name="Inamoto S."/>
            <person name="Hara Y."/>
            <person name="Nagase T."/>
            <person name="Ohara O."/>
            <person name="Koga H."/>
        </authorList>
    </citation>
    <scope>NUCLEOTIDE SEQUENCE [LARGE SCALE MRNA]</scope>
    <source>
        <tissue>Brain</tissue>
    </source>
</reference>
<reference key="2">
    <citation type="journal article" date="2005" name="Science">
        <title>The transcriptional landscape of the mammalian genome.</title>
        <authorList>
            <person name="Carninci P."/>
            <person name="Kasukawa T."/>
            <person name="Katayama S."/>
            <person name="Gough J."/>
            <person name="Frith M.C."/>
            <person name="Maeda N."/>
            <person name="Oyama R."/>
            <person name="Ravasi T."/>
            <person name="Lenhard B."/>
            <person name="Wells C."/>
            <person name="Kodzius R."/>
            <person name="Shimokawa K."/>
            <person name="Bajic V.B."/>
            <person name="Brenner S.E."/>
            <person name="Batalov S."/>
            <person name="Forrest A.R."/>
            <person name="Zavolan M."/>
            <person name="Davis M.J."/>
            <person name="Wilming L.G."/>
            <person name="Aidinis V."/>
            <person name="Allen J.E."/>
            <person name="Ambesi-Impiombato A."/>
            <person name="Apweiler R."/>
            <person name="Aturaliya R.N."/>
            <person name="Bailey T.L."/>
            <person name="Bansal M."/>
            <person name="Baxter L."/>
            <person name="Beisel K.W."/>
            <person name="Bersano T."/>
            <person name="Bono H."/>
            <person name="Chalk A.M."/>
            <person name="Chiu K.P."/>
            <person name="Choudhary V."/>
            <person name="Christoffels A."/>
            <person name="Clutterbuck D.R."/>
            <person name="Crowe M.L."/>
            <person name="Dalla E."/>
            <person name="Dalrymple B.P."/>
            <person name="de Bono B."/>
            <person name="Della Gatta G."/>
            <person name="di Bernardo D."/>
            <person name="Down T."/>
            <person name="Engstrom P."/>
            <person name="Fagiolini M."/>
            <person name="Faulkner G."/>
            <person name="Fletcher C.F."/>
            <person name="Fukushima T."/>
            <person name="Furuno M."/>
            <person name="Futaki S."/>
            <person name="Gariboldi M."/>
            <person name="Georgii-Hemming P."/>
            <person name="Gingeras T.R."/>
            <person name="Gojobori T."/>
            <person name="Green R.E."/>
            <person name="Gustincich S."/>
            <person name="Harbers M."/>
            <person name="Hayashi Y."/>
            <person name="Hensch T.K."/>
            <person name="Hirokawa N."/>
            <person name="Hill D."/>
            <person name="Huminiecki L."/>
            <person name="Iacono M."/>
            <person name="Ikeo K."/>
            <person name="Iwama A."/>
            <person name="Ishikawa T."/>
            <person name="Jakt M."/>
            <person name="Kanapin A."/>
            <person name="Katoh M."/>
            <person name="Kawasawa Y."/>
            <person name="Kelso J."/>
            <person name="Kitamura H."/>
            <person name="Kitano H."/>
            <person name="Kollias G."/>
            <person name="Krishnan S.P."/>
            <person name="Kruger A."/>
            <person name="Kummerfeld S.K."/>
            <person name="Kurochkin I.V."/>
            <person name="Lareau L.F."/>
            <person name="Lazarevic D."/>
            <person name="Lipovich L."/>
            <person name="Liu J."/>
            <person name="Liuni S."/>
            <person name="McWilliam S."/>
            <person name="Madan Babu M."/>
            <person name="Madera M."/>
            <person name="Marchionni L."/>
            <person name="Matsuda H."/>
            <person name="Matsuzawa S."/>
            <person name="Miki H."/>
            <person name="Mignone F."/>
            <person name="Miyake S."/>
            <person name="Morris K."/>
            <person name="Mottagui-Tabar S."/>
            <person name="Mulder N."/>
            <person name="Nakano N."/>
            <person name="Nakauchi H."/>
            <person name="Ng P."/>
            <person name="Nilsson R."/>
            <person name="Nishiguchi S."/>
            <person name="Nishikawa S."/>
            <person name="Nori F."/>
            <person name="Ohara O."/>
            <person name="Okazaki Y."/>
            <person name="Orlando V."/>
            <person name="Pang K.C."/>
            <person name="Pavan W.J."/>
            <person name="Pavesi G."/>
            <person name="Pesole G."/>
            <person name="Petrovsky N."/>
            <person name="Piazza S."/>
            <person name="Reed J."/>
            <person name="Reid J.F."/>
            <person name="Ring B.Z."/>
            <person name="Ringwald M."/>
            <person name="Rost B."/>
            <person name="Ruan Y."/>
            <person name="Salzberg S.L."/>
            <person name="Sandelin A."/>
            <person name="Schneider C."/>
            <person name="Schoenbach C."/>
            <person name="Sekiguchi K."/>
            <person name="Semple C.A."/>
            <person name="Seno S."/>
            <person name="Sessa L."/>
            <person name="Sheng Y."/>
            <person name="Shibata Y."/>
            <person name="Shimada H."/>
            <person name="Shimada K."/>
            <person name="Silva D."/>
            <person name="Sinclair B."/>
            <person name="Sperling S."/>
            <person name="Stupka E."/>
            <person name="Sugiura K."/>
            <person name="Sultana R."/>
            <person name="Takenaka Y."/>
            <person name="Taki K."/>
            <person name="Tammoja K."/>
            <person name="Tan S.L."/>
            <person name="Tang S."/>
            <person name="Taylor M.S."/>
            <person name="Tegner J."/>
            <person name="Teichmann S.A."/>
            <person name="Ueda H.R."/>
            <person name="van Nimwegen E."/>
            <person name="Verardo R."/>
            <person name="Wei C.L."/>
            <person name="Yagi K."/>
            <person name="Yamanishi H."/>
            <person name="Zabarovsky E."/>
            <person name="Zhu S."/>
            <person name="Zimmer A."/>
            <person name="Hide W."/>
            <person name="Bult C."/>
            <person name="Grimmond S.M."/>
            <person name="Teasdale R.D."/>
            <person name="Liu E.T."/>
            <person name="Brusic V."/>
            <person name="Quackenbush J."/>
            <person name="Wahlestedt C."/>
            <person name="Mattick J.S."/>
            <person name="Hume D.A."/>
            <person name="Kai C."/>
            <person name="Sasaki D."/>
            <person name="Tomaru Y."/>
            <person name="Fukuda S."/>
            <person name="Kanamori-Katayama M."/>
            <person name="Suzuki M."/>
            <person name="Aoki J."/>
            <person name="Arakawa T."/>
            <person name="Iida J."/>
            <person name="Imamura K."/>
            <person name="Itoh M."/>
            <person name="Kato T."/>
            <person name="Kawaji H."/>
            <person name="Kawagashira N."/>
            <person name="Kawashima T."/>
            <person name="Kojima M."/>
            <person name="Kondo S."/>
            <person name="Konno H."/>
            <person name="Nakano K."/>
            <person name="Ninomiya N."/>
            <person name="Nishio T."/>
            <person name="Okada M."/>
            <person name="Plessy C."/>
            <person name="Shibata K."/>
            <person name="Shiraki T."/>
            <person name="Suzuki S."/>
            <person name="Tagami M."/>
            <person name="Waki K."/>
            <person name="Watahiki A."/>
            <person name="Okamura-Oho Y."/>
            <person name="Suzuki H."/>
            <person name="Kawai J."/>
            <person name="Hayashizaki Y."/>
        </authorList>
    </citation>
    <scope>NUCLEOTIDE SEQUENCE [LARGE SCALE MRNA]</scope>
    <source>
        <strain>C57BL/6J</strain>
        <tissue>Hypothalamus</tissue>
        <tissue>Spinal ganglion</tissue>
    </source>
</reference>
<reference evidence="5" key="3">
    <citation type="journal article" date="2004" name="Genome Res.">
        <title>The status, quality, and expansion of the NIH full-length cDNA project: the Mammalian Gene Collection (MGC).</title>
        <authorList>
            <consortium name="The MGC Project Team"/>
        </authorList>
    </citation>
    <scope>NUCLEOTIDE SEQUENCE [LARGE SCALE MRNA]</scope>
    <source>
        <tissue evidence="6">Retina</tissue>
    </source>
</reference>
<reference key="4">
    <citation type="submission" date="2009-01" db="UniProtKB">
        <authorList>
            <person name="Lubec G."/>
            <person name="Klug S."/>
            <person name="Kang S.U."/>
            <person name="Sunyer B."/>
            <person name="Chen W.-Q."/>
        </authorList>
    </citation>
    <scope>PROTEIN SEQUENCE OF 99-109; 165-177; 362-372; 398-414; 504-529; 533-544; 571-585 AND 641-654</scope>
    <scope>IDENTIFICATION BY MASS SPECTROMETRY</scope>
    <source>
        <strain>C57BL/6J</strain>
        <strain>OF1</strain>
        <tissue>Brain</tissue>
        <tissue>Hippocampus</tissue>
    </source>
</reference>
<reference evidence="5" key="5">
    <citation type="journal article" date="2003" name="Proc. Natl. Acad. Sci. U.S.A.">
        <title>Two Hsp70 family members expressed in atherosclerotic lesions.</title>
        <authorList>
            <person name="Han Z."/>
            <person name="Truong Q.A."/>
            <person name="Park S."/>
            <person name="Breslow J.L."/>
        </authorList>
    </citation>
    <scope>IDENTIFICATION</scope>
    <scope>TISSUE SPECIFICITY</scope>
</reference>
<reference key="6">
    <citation type="journal article" date="2010" name="Cell">
        <title>A tissue-specific atlas of mouse protein phosphorylation and expression.</title>
        <authorList>
            <person name="Huttlin E.L."/>
            <person name="Jedrychowski M.P."/>
            <person name="Elias J.E."/>
            <person name="Goswami T."/>
            <person name="Rad R."/>
            <person name="Beausoleil S.A."/>
            <person name="Villen J."/>
            <person name="Haas W."/>
            <person name="Sowa M.E."/>
            <person name="Gygi S.P."/>
        </authorList>
    </citation>
    <scope>IDENTIFICATION BY MASS SPECTROMETRY [LARGE SCALE ANALYSIS]</scope>
    <source>
        <tissue>Brain</tissue>
        <tissue>Brown adipose tissue</tissue>
        <tissue>Heart</tissue>
        <tissue>Kidney</tissue>
        <tissue>Lung</tissue>
        <tissue>Spleen</tissue>
        <tissue>Testis</tissue>
    </source>
</reference>
<reference key="7">
    <citation type="journal article" date="2019" name="Sci. Rep.">
        <title>HSPA12A targets the cytoplasmic domain and affects the trafficking of the Amyloid Precursor Protein receptor SorLA.</title>
        <authorList>
            <person name="Madsen P."/>
            <person name="Isaksen T.J."/>
            <person name="Siupka P."/>
            <person name="Toth A.E."/>
            <person name="Nyegaard M."/>
            <person name="Gustafsen C."/>
            <person name="Nielsen M.S."/>
        </authorList>
    </citation>
    <scope>SUBCELLULAR LOCATION</scope>
    <scope>TISSUE SPECIFICITY</scope>
</reference>
<name>HS12A_MOUSE</name>
<dbReference type="EMBL" id="AB093239">
    <property type="protein sequence ID" value="BAC41423.1"/>
    <property type="status" value="ALT_INIT"/>
    <property type="molecule type" value="mRNA"/>
</dbReference>
<dbReference type="EMBL" id="AK038491">
    <property type="protein sequence ID" value="BAC30016.1"/>
    <property type="molecule type" value="mRNA"/>
</dbReference>
<dbReference type="EMBL" id="AK141925">
    <property type="protein sequence ID" value="BAE24890.1"/>
    <property type="molecule type" value="mRNA"/>
</dbReference>
<dbReference type="EMBL" id="BC030362">
    <property type="protein sequence ID" value="AAH30362.1"/>
    <property type="molecule type" value="mRNA"/>
</dbReference>
<dbReference type="EMBL" id="AY196789">
    <property type="protein sequence ID" value="AAO37638.1"/>
    <property type="molecule type" value="mRNA"/>
</dbReference>
<dbReference type="CCDS" id="CCDS38032.1"/>
<dbReference type="RefSeq" id="NP_001314927.1">
    <property type="nucleotide sequence ID" value="NM_001327998.1"/>
</dbReference>
<dbReference type="RefSeq" id="NP_780408.1">
    <property type="nucleotide sequence ID" value="NM_175199.3"/>
</dbReference>
<dbReference type="SMR" id="Q8K0U4"/>
<dbReference type="BioGRID" id="216020">
    <property type="interactions" value="23"/>
</dbReference>
<dbReference type="FunCoup" id="Q8K0U4">
    <property type="interactions" value="360"/>
</dbReference>
<dbReference type="IntAct" id="Q8K0U4">
    <property type="interactions" value="3"/>
</dbReference>
<dbReference type="STRING" id="10090.ENSMUSP00000066860"/>
<dbReference type="GlyGen" id="Q8K0U4">
    <property type="glycosylation" value="2 sites, 1 O-linked glycan (2 sites)"/>
</dbReference>
<dbReference type="iPTMnet" id="Q8K0U4"/>
<dbReference type="MetOSite" id="Q8K0U4"/>
<dbReference type="PhosphoSitePlus" id="Q8K0U4"/>
<dbReference type="SwissPalm" id="Q8K0U4"/>
<dbReference type="jPOST" id="Q8K0U4"/>
<dbReference type="PaxDb" id="10090-ENSMUSP00000066860"/>
<dbReference type="PeptideAtlas" id="Q8K0U4"/>
<dbReference type="ProteomicsDB" id="267163"/>
<dbReference type="Antibodypedia" id="2201">
    <property type="antibodies" value="102 antibodies from 23 providers"/>
</dbReference>
<dbReference type="Ensembl" id="ENSMUST00000066285.6">
    <property type="protein sequence ID" value="ENSMUSP00000066860.5"/>
    <property type="gene ID" value="ENSMUSG00000025092.8"/>
</dbReference>
<dbReference type="GeneID" id="73442"/>
<dbReference type="KEGG" id="mmu:73442"/>
<dbReference type="UCSC" id="uc008iaw.1">
    <property type="organism name" value="mouse"/>
</dbReference>
<dbReference type="AGR" id="MGI:1920692"/>
<dbReference type="CTD" id="259217"/>
<dbReference type="MGI" id="MGI:1920692">
    <property type="gene designation" value="Hspa12a"/>
</dbReference>
<dbReference type="VEuPathDB" id="HostDB:ENSMUSG00000025092"/>
<dbReference type="eggNOG" id="KOG0101">
    <property type="taxonomic scope" value="Eukaryota"/>
</dbReference>
<dbReference type="GeneTree" id="ENSGT00940000154551"/>
<dbReference type="HOGENOM" id="CLU_009958_5_3_1"/>
<dbReference type="InParanoid" id="Q8K0U4"/>
<dbReference type="OMA" id="MGRCTSR"/>
<dbReference type="OrthoDB" id="2963168at2759"/>
<dbReference type="PhylomeDB" id="Q8K0U4"/>
<dbReference type="TreeFam" id="TF329492"/>
<dbReference type="Reactome" id="R-MMU-3371453">
    <property type="pathway name" value="Regulation of HSF1-mediated heat shock response"/>
</dbReference>
<dbReference type="BioGRID-ORCS" id="73442">
    <property type="hits" value="4 hits in 77 CRISPR screens"/>
</dbReference>
<dbReference type="CD-CODE" id="CE726F99">
    <property type="entry name" value="Postsynaptic density"/>
</dbReference>
<dbReference type="ChiTaRS" id="Hspa12a">
    <property type="organism name" value="mouse"/>
</dbReference>
<dbReference type="PRO" id="PR:Q8K0U4"/>
<dbReference type="Proteomes" id="UP000000589">
    <property type="component" value="Chromosome 19"/>
</dbReference>
<dbReference type="RNAct" id="Q8K0U4">
    <property type="molecule type" value="protein"/>
</dbReference>
<dbReference type="Bgee" id="ENSMUSG00000025092">
    <property type="expression patterns" value="Expressed in lateral geniculate body and 210 other cell types or tissues"/>
</dbReference>
<dbReference type="ExpressionAtlas" id="Q8K0U4">
    <property type="expression patterns" value="baseline and differential"/>
</dbReference>
<dbReference type="GO" id="GO:0005737">
    <property type="term" value="C:cytoplasm"/>
    <property type="evidence" value="ECO:0007669"/>
    <property type="project" value="UniProtKB-SubCell"/>
</dbReference>
<dbReference type="GO" id="GO:0005634">
    <property type="term" value="C:nucleus"/>
    <property type="evidence" value="ECO:0007669"/>
    <property type="project" value="UniProtKB-SubCell"/>
</dbReference>
<dbReference type="GO" id="GO:0005524">
    <property type="term" value="F:ATP binding"/>
    <property type="evidence" value="ECO:0007669"/>
    <property type="project" value="UniProtKB-KW"/>
</dbReference>
<dbReference type="GO" id="GO:0051170">
    <property type="term" value="P:import into nucleus"/>
    <property type="evidence" value="ECO:0000315"/>
    <property type="project" value="MGI"/>
</dbReference>
<dbReference type="GO" id="GO:0006954">
    <property type="term" value="P:inflammatory response"/>
    <property type="evidence" value="ECO:0000315"/>
    <property type="project" value="MGI"/>
</dbReference>
<dbReference type="GO" id="GO:0001889">
    <property type="term" value="P:liver development"/>
    <property type="evidence" value="ECO:0000315"/>
    <property type="project" value="MGI"/>
</dbReference>
<dbReference type="GO" id="GO:0042116">
    <property type="term" value="P:macrophage activation"/>
    <property type="evidence" value="ECO:0000315"/>
    <property type="project" value="MGI"/>
</dbReference>
<dbReference type="CDD" id="cd11735">
    <property type="entry name" value="ASKHA_NBD_HSP70_HSPA12A"/>
    <property type="match status" value="1"/>
</dbReference>
<dbReference type="FunFam" id="3.30.420.40:FF:000061">
    <property type="entry name" value="Heat shock protein family A (Hsp70) member 12A"/>
    <property type="match status" value="1"/>
</dbReference>
<dbReference type="FunFam" id="3.90.640.10:FF:000011">
    <property type="entry name" value="Heat shock protein family A (Hsp70) member 12A"/>
    <property type="match status" value="1"/>
</dbReference>
<dbReference type="Gene3D" id="3.30.420.40">
    <property type="match status" value="2"/>
</dbReference>
<dbReference type="Gene3D" id="3.90.640.10">
    <property type="entry name" value="Actin, Chain A, domain 4"/>
    <property type="match status" value="1"/>
</dbReference>
<dbReference type="InterPro" id="IPR043129">
    <property type="entry name" value="ATPase_NBD"/>
</dbReference>
<dbReference type="InterPro" id="IPR026685">
    <property type="entry name" value="HSPA12A_NBD"/>
</dbReference>
<dbReference type="PANTHER" id="PTHR14187">
    <property type="entry name" value="ALPHA KINASE/ELONGATION FACTOR 2 KINASE"/>
    <property type="match status" value="1"/>
</dbReference>
<dbReference type="PANTHER" id="PTHR14187:SF46">
    <property type="entry name" value="HEAT SHOCK 70 KDA PROTEIN 12A"/>
    <property type="match status" value="1"/>
</dbReference>
<dbReference type="SUPFAM" id="SSF53067">
    <property type="entry name" value="Actin-like ATPase domain"/>
    <property type="match status" value="2"/>
</dbReference>
<organism evidence="6">
    <name type="scientific">Mus musculus</name>
    <name type="common">Mouse</name>
    <dbReference type="NCBI Taxonomy" id="10090"/>
    <lineage>
        <taxon>Eukaryota</taxon>
        <taxon>Metazoa</taxon>
        <taxon>Chordata</taxon>
        <taxon>Craniata</taxon>
        <taxon>Vertebrata</taxon>
        <taxon>Euteleostomi</taxon>
        <taxon>Mammalia</taxon>
        <taxon>Eutheria</taxon>
        <taxon>Euarchontoglires</taxon>
        <taxon>Glires</taxon>
        <taxon>Rodentia</taxon>
        <taxon>Myomorpha</taxon>
        <taxon>Muroidea</taxon>
        <taxon>Muridae</taxon>
        <taxon>Murinae</taxon>
        <taxon>Mus</taxon>
        <taxon>Mus</taxon>
    </lineage>
</organism>
<sequence length="675" mass="74871">MADKEAGGGDAGPRETAPTSTYSSPARSLGDTGITPLSPSHILNDADPVSEQQTFLVVVAIDFGTTSSGYAYSFTKEPECIHVMRRWEGGDPGVSNQKTPTTILLTPERKFHSFGYAARDFYHDLDPSEAKQWLYLEKFKMKLHTTGDLTMDTDLTAANGKKVKALEIFAYALQYFKEQALKELSDQAGSDFENSDVRWVITVPAIWKQPAKQFMREAAYQAGLASPENSEQLIIALEPEAASIYCRKLRLHQMIELSSKAVVNGYSASDTVGAGFAQAKEHVRRNRQSRTFLVENVIGEIWSELEEGDKYVVVDSGGGTVDLTVHQIRLPEGHLKELYKATGGPYGSLGVDYEFEKLLCKIFGEDFIEQFKIKRPAAWVDLMIAFESRKRAAAPDRTNPLNITLPFSFIDYYKKFRGHSVEHALRKSNVDFVKWSSQGMLRMSPDAMNALFKPTIDSIIEHLRDLFQKPEVSTVKFLFLVGGFAEAPLLQQAVQTAFGDKCRIIIPQDVGLTILKGAVLFGLDPAVIKVRRSPLTYGVGVLNRYVEGKHPPEKLLVKDGTRWCTDVFDKFISADQSVALGELVKRSYTPAKPSQLVIIINIYSSEHDNVSFITDPGVKKCGTLRLDLTGSGGTAVPARREIQTIMQFGDTEIKATAVDITTSKSVKVGIDFLNY</sequence>
<protein>
    <recommendedName>
        <fullName>Heat shock 70 kDa protein 12A</fullName>
    </recommendedName>
</protein>
<gene>
    <name type="primary">Hspa12a</name>
    <name type="synonym">Kiaa0417</name>
</gene>
<keyword id="KW-0007">Acetylation</keyword>
<keyword id="KW-0067">ATP-binding</keyword>
<keyword id="KW-0963">Cytoplasm</keyword>
<keyword id="KW-0903">Direct protein sequencing</keyword>
<keyword id="KW-0547">Nucleotide-binding</keyword>
<keyword id="KW-0539">Nucleus</keyword>
<keyword id="KW-1185">Reference proteome</keyword>
<comment type="function">
    <text evidence="1">Adapter protein for SORL1, but not SORT1. Delays SORL1 internalization and affects SORL1 subcellular localization.</text>
</comment>
<comment type="subunit">
    <text evidence="1">Interacts with SORL1 (via cytosolic C-terminus); this interaction affects SORL1 internalization and subcellular localization.</text>
</comment>
<comment type="subcellular location">
    <subcellularLocation>
        <location evidence="4">Cytoplasm</location>
    </subcellularLocation>
    <subcellularLocation>
        <location evidence="4">Nucleus</location>
    </subcellularLocation>
</comment>
<comment type="tissue specificity">
    <text evidence="3 4">Expressed most strongly in brain, kidney and heart with little or no expression in other tissues (PubMed:12552099). In the brain, expressed in glial cells, including astrocytes (at protein level) (PubMed:30679749). In the aorta, preferentially expressed in lesions (PubMed:12552099).</text>
</comment>
<comment type="similarity">
    <text evidence="5">Belongs to the heat shock protein 70 family.</text>
</comment>
<comment type="sequence caution" evidence="5">
    <conflict type="erroneous initiation">
        <sequence resource="EMBL-CDS" id="BAC41423"/>
    </conflict>
</comment>
<feature type="initiator methionine" description="Removed" evidence="1">
    <location>
        <position position="1"/>
    </location>
</feature>
<feature type="chain" id="PRO_0000078293" description="Heat shock 70 kDa protein 12A">
    <location>
        <begin position="2"/>
        <end position="675"/>
    </location>
</feature>
<feature type="region of interest" description="Disordered" evidence="2">
    <location>
        <begin position="1"/>
        <end position="45"/>
    </location>
</feature>
<feature type="compositionally biased region" description="Polar residues" evidence="2">
    <location>
        <begin position="17"/>
        <end position="26"/>
    </location>
</feature>
<feature type="modified residue" description="N-acetylalanine" evidence="1">
    <location>
        <position position="2"/>
    </location>
</feature>
<feature type="sequence conflict" description="In Ref. 1; BAC41423." evidence="5" ref="1">
    <original>S</original>
    <variation>N</variation>
    <location>
        <position position="128"/>
    </location>
</feature>
<feature type="sequence conflict" description="In Ref. 1; BAC41423." evidence="5" ref="1">
    <original>H</original>
    <variation>R</variation>
    <location>
        <position position="607"/>
    </location>
</feature>
<evidence type="ECO:0000250" key="1">
    <source>
        <dbReference type="UniProtKB" id="O43301"/>
    </source>
</evidence>
<evidence type="ECO:0000256" key="2">
    <source>
        <dbReference type="SAM" id="MobiDB-lite"/>
    </source>
</evidence>
<evidence type="ECO:0000269" key="3">
    <source>
    </source>
</evidence>
<evidence type="ECO:0000269" key="4">
    <source>
    </source>
</evidence>
<evidence type="ECO:0000305" key="5"/>
<evidence type="ECO:0000312" key="6">
    <source>
        <dbReference type="EMBL" id="AAH30362.1"/>
    </source>
</evidence>
<accession>Q8K0U4</accession>
<accession>Q3UQZ8</accession>
<accession>Q8CHF6</accession>
<proteinExistence type="evidence at protein level"/>